<comment type="function">
    <text evidence="1">Catalyzes the conversion of oxaloacetate (OAA) to phosphoenolpyruvate (PEP), the rate-limiting step in the metabolic pathway that produces glucose from lactate and other precursors derived from the citric acid cycle.</text>
</comment>
<comment type="catalytic activity">
    <reaction evidence="1">
        <text>oxaloacetate + GTP = phosphoenolpyruvate + GDP + CO2</text>
        <dbReference type="Rhea" id="RHEA:10388"/>
        <dbReference type="ChEBI" id="CHEBI:16452"/>
        <dbReference type="ChEBI" id="CHEBI:16526"/>
        <dbReference type="ChEBI" id="CHEBI:37565"/>
        <dbReference type="ChEBI" id="CHEBI:58189"/>
        <dbReference type="ChEBI" id="CHEBI:58702"/>
        <dbReference type="EC" id="4.1.1.32"/>
    </reaction>
</comment>
<comment type="cofactor">
    <cofactor evidence="1">
        <name>Mn(2+)</name>
        <dbReference type="ChEBI" id="CHEBI:29035"/>
    </cofactor>
    <text evidence="1">Binds 1 Mn(2+) ion per subunit.</text>
</comment>
<comment type="pathway">
    <text evidence="1">Carbohydrate biosynthesis; gluconeogenesis.</text>
</comment>
<comment type="subunit">
    <text evidence="1">Monomer.</text>
</comment>
<comment type="subcellular location">
    <subcellularLocation>
        <location evidence="1">Cytoplasm</location>
    </subcellularLocation>
</comment>
<comment type="similarity">
    <text evidence="1">Belongs to the phosphoenolpyruvate carboxykinase [GTP] family.</text>
</comment>
<feature type="chain" id="PRO_0000103592" description="Phosphoenolpyruvate carboxykinase [GTP]">
    <location>
        <begin position="1"/>
        <end position="621"/>
    </location>
</feature>
<feature type="region of interest" description="Disordered" evidence="2">
    <location>
        <begin position="391"/>
        <end position="414"/>
    </location>
</feature>
<feature type="compositionally biased region" description="Polar residues" evidence="2">
    <location>
        <begin position="400"/>
        <end position="410"/>
    </location>
</feature>
<feature type="active site" evidence="1">
    <location>
        <position position="280"/>
    </location>
</feature>
<feature type="binding site" evidence="1">
    <location>
        <position position="88"/>
    </location>
    <ligand>
        <name>substrate</name>
    </ligand>
</feature>
<feature type="binding site" evidence="1">
    <location>
        <begin position="227"/>
        <end position="229"/>
    </location>
    <ligand>
        <name>substrate</name>
    </ligand>
</feature>
<feature type="binding site" evidence="1">
    <location>
        <position position="236"/>
    </location>
    <ligand>
        <name>Mn(2+)</name>
        <dbReference type="ChEBI" id="CHEBI:29035"/>
    </ligand>
</feature>
<feature type="binding site" evidence="1">
    <location>
        <position position="256"/>
    </location>
    <ligand>
        <name>Mn(2+)</name>
        <dbReference type="ChEBI" id="CHEBI:29035"/>
    </ligand>
</feature>
<feature type="binding site" evidence="1">
    <location>
        <position position="278"/>
    </location>
    <ligand>
        <name>substrate</name>
    </ligand>
</feature>
<feature type="binding site" evidence="1">
    <location>
        <begin position="279"/>
        <end position="284"/>
    </location>
    <ligand>
        <name>GTP</name>
        <dbReference type="ChEBI" id="CHEBI:37565"/>
    </ligand>
</feature>
<feature type="binding site" evidence="1">
    <location>
        <position position="305"/>
    </location>
    <ligand>
        <name>Mn(2+)</name>
        <dbReference type="ChEBI" id="CHEBI:29035"/>
    </ligand>
</feature>
<feature type="binding site" evidence="1">
    <location>
        <begin position="399"/>
        <end position="401"/>
    </location>
    <ligand>
        <name>substrate</name>
    </ligand>
</feature>
<feature type="binding site" evidence="1">
    <location>
        <position position="401"/>
    </location>
    <ligand>
        <name>GTP</name>
        <dbReference type="ChEBI" id="CHEBI:37565"/>
    </ligand>
</feature>
<feature type="binding site" evidence="1">
    <location>
        <position position="432"/>
    </location>
    <ligand>
        <name>GTP</name>
        <dbReference type="ChEBI" id="CHEBI:37565"/>
    </ligand>
</feature>
<feature type="binding site" evidence="1">
    <location>
        <begin position="529"/>
        <end position="532"/>
    </location>
    <ligand>
        <name>GTP</name>
        <dbReference type="ChEBI" id="CHEBI:37565"/>
    </ligand>
</feature>
<sequence length="621" mass="68534">MTRSNVVAATRTVPIDVPEYVKHRGLIDWVARIAELTEPDRVVWCDGSQQEYDRLCDAMVEQRTMVRLNPAKRPNSFLALSDPSDVARVEDRTFICSEHRDDAGPTNHWVAPAEMRATLNGLFRGAMRGRTLYVVPFSMGPLGSPIAHIGVELSDSPYVVVNMRIMTRMGRAVLDALGERGEYVPCVHSVGRPLAAGEQDVPWPCNPTKYIVHFPESREIWSFGSGYGGNALLGKKCFALRIASTMGRDEGWLAEHMLILGVTSPEGRKYHIAAAFPSACGKTNFAMLIPPKGFEGWRVTTIGDDIAWLKPGRDGRLYAINPEAGYFGVAPGTGEKTNPNALATLRENVIFTNVALTEDGDVWWEGLTDTPPARLTDWQGNAWTPEIGRETGRKAAHPNSRFTAPASQCPSIDDDWENPGGVPIDAFIFGGRRSTTVPLVTEARDWIEGVYMAATMGSETTAAAAGQQGIVRRDPFAMLPFCGYNMSDYFSHWLALGEKLAAAGATLPKIYCVNWFRKDADGRFAWPGFGENMRVLKWMLDRIDGRGEGVEHAFGVTPRYEDLHWAGLAFSPAQYAQVTSMNPDEWRAELALHAELFDKLSARLPDALAETKARIEKRLGG</sequence>
<protein>
    <recommendedName>
        <fullName evidence="1">Phosphoenolpyruvate carboxykinase [GTP]</fullName>
        <shortName evidence="1">PEP carboxykinase</shortName>
        <shortName evidence="1">PEPCK</shortName>
        <ecNumber evidence="1">4.1.1.32</ecNumber>
    </recommendedName>
</protein>
<name>PCKG_BURMA</name>
<organism>
    <name type="scientific">Burkholderia mallei (strain ATCC 23344)</name>
    <dbReference type="NCBI Taxonomy" id="243160"/>
    <lineage>
        <taxon>Bacteria</taxon>
        <taxon>Pseudomonadati</taxon>
        <taxon>Pseudomonadota</taxon>
        <taxon>Betaproteobacteria</taxon>
        <taxon>Burkholderiales</taxon>
        <taxon>Burkholderiaceae</taxon>
        <taxon>Burkholderia</taxon>
        <taxon>pseudomallei group</taxon>
    </lineage>
</organism>
<gene>
    <name evidence="1" type="primary">pckG</name>
    <name type="ordered locus">BMA3042</name>
</gene>
<evidence type="ECO:0000255" key="1">
    <source>
        <dbReference type="HAMAP-Rule" id="MF_00452"/>
    </source>
</evidence>
<evidence type="ECO:0000256" key="2">
    <source>
        <dbReference type="SAM" id="MobiDB-lite"/>
    </source>
</evidence>
<accession>Q62FI7</accession>
<dbReference type="EC" id="4.1.1.32" evidence="1"/>
<dbReference type="EMBL" id="CP000010">
    <property type="protein sequence ID" value="AAU48453.1"/>
    <property type="molecule type" value="Genomic_DNA"/>
</dbReference>
<dbReference type="RefSeq" id="WP_004193209.1">
    <property type="nucleotide sequence ID" value="NC_006348.1"/>
</dbReference>
<dbReference type="RefSeq" id="YP_104540.1">
    <property type="nucleotide sequence ID" value="NC_006348.1"/>
</dbReference>
<dbReference type="SMR" id="Q62FI7"/>
<dbReference type="KEGG" id="bma:BMA3042"/>
<dbReference type="PATRIC" id="fig|243160.12.peg.3118"/>
<dbReference type="eggNOG" id="COG1274">
    <property type="taxonomic scope" value="Bacteria"/>
</dbReference>
<dbReference type="HOGENOM" id="CLU_028872_1_1_4"/>
<dbReference type="UniPathway" id="UPA00138"/>
<dbReference type="Proteomes" id="UP000006693">
    <property type="component" value="Chromosome 1"/>
</dbReference>
<dbReference type="GO" id="GO:0005829">
    <property type="term" value="C:cytosol"/>
    <property type="evidence" value="ECO:0007669"/>
    <property type="project" value="TreeGrafter"/>
</dbReference>
<dbReference type="GO" id="GO:0005525">
    <property type="term" value="F:GTP binding"/>
    <property type="evidence" value="ECO:0007669"/>
    <property type="project" value="UniProtKB-UniRule"/>
</dbReference>
<dbReference type="GO" id="GO:0030145">
    <property type="term" value="F:manganese ion binding"/>
    <property type="evidence" value="ECO:0007669"/>
    <property type="project" value="UniProtKB-UniRule"/>
</dbReference>
<dbReference type="GO" id="GO:0004613">
    <property type="term" value="F:phosphoenolpyruvate carboxykinase (GTP) activity"/>
    <property type="evidence" value="ECO:0007669"/>
    <property type="project" value="UniProtKB-UniRule"/>
</dbReference>
<dbReference type="GO" id="GO:0071333">
    <property type="term" value="P:cellular response to glucose stimulus"/>
    <property type="evidence" value="ECO:0007669"/>
    <property type="project" value="TreeGrafter"/>
</dbReference>
<dbReference type="GO" id="GO:0006094">
    <property type="term" value="P:gluconeogenesis"/>
    <property type="evidence" value="ECO:0007669"/>
    <property type="project" value="UniProtKB-UniRule"/>
</dbReference>
<dbReference type="GO" id="GO:0046327">
    <property type="term" value="P:glycerol biosynthetic process from pyruvate"/>
    <property type="evidence" value="ECO:0007669"/>
    <property type="project" value="TreeGrafter"/>
</dbReference>
<dbReference type="GO" id="GO:0006107">
    <property type="term" value="P:oxaloacetate metabolic process"/>
    <property type="evidence" value="ECO:0007669"/>
    <property type="project" value="TreeGrafter"/>
</dbReference>
<dbReference type="GO" id="GO:0019543">
    <property type="term" value="P:propionate catabolic process"/>
    <property type="evidence" value="ECO:0007669"/>
    <property type="project" value="TreeGrafter"/>
</dbReference>
<dbReference type="GO" id="GO:0033993">
    <property type="term" value="P:response to lipid"/>
    <property type="evidence" value="ECO:0007669"/>
    <property type="project" value="TreeGrafter"/>
</dbReference>
<dbReference type="GO" id="GO:0042594">
    <property type="term" value="P:response to starvation"/>
    <property type="evidence" value="ECO:0007669"/>
    <property type="project" value="TreeGrafter"/>
</dbReference>
<dbReference type="CDD" id="cd00819">
    <property type="entry name" value="PEPCK_GTP"/>
    <property type="match status" value="1"/>
</dbReference>
<dbReference type="FunFam" id="3.40.449.10:FF:000005">
    <property type="entry name" value="Phosphoenolpyruvate carboxykinase [GTP]"/>
    <property type="match status" value="1"/>
</dbReference>
<dbReference type="Gene3D" id="3.90.228.20">
    <property type="match status" value="1"/>
</dbReference>
<dbReference type="Gene3D" id="3.40.449.10">
    <property type="entry name" value="Phosphoenolpyruvate Carboxykinase, domain 1"/>
    <property type="match status" value="1"/>
</dbReference>
<dbReference type="Gene3D" id="2.170.8.10">
    <property type="entry name" value="Phosphoenolpyruvate Carboxykinase, domain 2"/>
    <property type="match status" value="1"/>
</dbReference>
<dbReference type="HAMAP" id="MF_00452">
    <property type="entry name" value="PEPCK_GTP"/>
    <property type="match status" value="1"/>
</dbReference>
<dbReference type="InterPro" id="IPR018091">
    <property type="entry name" value="PEP_carboxykin_GTP_CS"/>
</dbReference>
<dbReference type="InterPro" id="IPR013035">
    <property type="entry name" value="PEP_carboxykinase_C"/>
</dbReference>
<dbReference type="InterPro" id="IPR008209">
    <property type="entry name" value="PEP_carboxykinase_GTP"/>
</dbReference>
<dbReference type="InterPro" id="IPR035077">
    <property type="entry name" value="PEP_carboxykinase_GTP_C"/>
</dbReference>
<dbReference type="InterPro" id="IPR035078">
    <property type="entry name" value="PEP_carboxykinase_GTP_N"/>
</dbReference>
<dbReference type="InterPro" id="IPR008210">
    <property type="entry name" value="PEP_carboxykinase_N"/>
</dbReference>
<dbReference type="NCBIfam" id="NF003253">
    <property type="entry name" value="PRK04210.1"/>
    <property type="match status" value="1"/>
</dbReference>
<dbReference type="PANTHER" id="PTHR11561">
    <property type="entry name" value="PHOSPHOENOLPYRUVATE CARBOXYKINASE"/>
    <property type="match status" value="1"/>
</dbReference>
<dbReference type="PANTHER" id="PTHR11561:SF0">
    <property type="entry name" value="PHOSPHOENOLPYRUVATE CARBOXYKINASE [GTP]-RELATED"/>
    <property type="match status" value="1"/>
</dbReference>
<dbReference type="Pfam" id="PF00821">
    <property type="entry name" value="PEPCK_GTP"/>
    <property type="match status" value="1"/>
</dbReference>
<dbReference type="Pfam" id="PF17297">
    <property type="entry name" value="PEPCK_N"/>
    <property type="match status" value="1"/>
</dbReference>
<dbReference type="PIRSF" id="PIRSF001348">
    <property type="entry name" value="PEP_carboxykinase_GTP"/>
    <property type="match status" value="1"/>
</dbReference>
<dbReference type="SUPFAM" id="SSF68923">
    <property type="entry name" value="PEP carboxykinase N-terminal domain"/>
    <property type="match status" value="1"/>
</dbReference>
<dbReference type="SUPFAM" id="SSF53795">
    <property type="entry name" value="PEP carboxykinase-like"/>
    <property type="match status" value="1"/>
</dbReference>
<dbReference type="PROSITE" id="PS00505">
    <property type="entry name" value="PEPCK_GTP"/>
    <property type="match status" value="1"/>
</dbReference>
<keyword id="KW-0963">Cytoplasm</keyword>
<keyword id="KW-0210">Decarboxylase</keyword>
<keyword id="KW-0312">Gluconeogenesis</keyword>
<keyword id="KW-0342">GTP-binding</keyword>
<keyword id="KW-0456">Lyase</keyword>
<keyword id="KW-0464">Manganese</keyword>
<keyword id="KW-0479">Metal-binding</keyword>
<keyword id="KW-0547">Nucleotide-binding</keyword>
<keyword id="KW-1185">Reference proteome</keyword>
<proteinExistence type="inferred from homology"/>
<reference key="1">
    <citation type="journal article" date="2004" name="Proc. Natl. Acad. Sci. U.S.A.">
        <title>Structural flexibility in the Burkholderia mallei genome.</title>
        <authorList>
            <person name="Nierman W.C."/>
            <person name="DeShazer D."/>
            <person name="Kim H.S."/>
            <person name="Tettelin H."/>
            <person name="Nelson K.E."/>
            <person name="Feldblyum T.V."/>
            <person name="Ulrich R.L."/>
            <person name="Ronning C.M."/>
            <person name="Brinkac L.M."/>
            <person name="Daugherty S.C."/>
            <person name="Davidsen T.D."/>
            <person name="DeBoy R.T."/>
            <person name="Dimitrov G."/>
            <person name="Dodson R.J."/>
            <person name="Durkin A.S."/>
            <person name="Gwinn M.L."/>
            <person name="Haft D.H."/>
            <person name="Khouri H.M."/>
            <person name="Kolonay J.F."/>
            <person name="Madupu R."/>
            <person name="Mohammoud Y."/>
            <person name="Nelson W.C."/>
            <person name="Radune D."/>
            <person name="Romero C.M."/>
            <person name="Sarria S."/>
            <person name="Selengut J."/>
            <person name="Shamblin C."/>
            <person name="Sullivan S.A."/>
            <person name="White O."/>
            <person name="Yu Y."/>
            <person name="Zafar N."/>
            <person name="Zhou L."/>
            <person name="Fraser C.M."/>
        </authorList>
    </citation>
    <scope>NUCLEOTIDE SEQUENCE [LARGE SCALE GENOMIC DNA]</scope>
    <source>
        <strain>ATCC 23344</strain>
    </source>
</reference>